<sequence length="230" mass="24267">MTGLFPDNPEAPIDLLALEGQALRRGYFRIAGIDEAGRGPLAGPVVAAAVMLPAGLLLPGVNDSKQLTEEKREELFDVIHREALAVGVGIGDHALVDSINILQATLSAMRDAVRALSITPGFLLIDGISNIPMNIPQRTVKKGDSLSLSIAAASIIAKVTRDRMMVEYDAQYPGYGFASHKGYGAASHLAAIAELGPCPIHRKTFSGVKEHLPSQPDSDTAGPSTGLFSF</sequence>
<gene>
    <name evidence="1" type="primary">rnhB</name>
    <name type="ordered locus">Gbem_3425</name>
</gene>
<organism>
    <name type="scientific">Citrifermentans bemidjiense (strain ATCC BAA-1014 / DSM 16622 / JCM 12645 / Bem)</name>
    <name type="common">Geobacter bemidjiensis</name>
    <dbReference type="NCBI Taxonomy" id="404380"/>
    <lineage>
        <taxon>Bacteria</taxon>
        <taxon>Pseudomonadati</taxon>
        <taxon>Thermodesulfobacteriota</taxon>
        <taxon>Desulfuromonadia</taxon>
        <taxon>Geobacterales</taxon>
        <taxon>Geobacteraceae</taxon>
        <taxon>Citrifermentans</taxon>
    </lineage>
</organism>
<dbReference type="EC" id="3.1.26.4" evidence="1"/>
<dbReference type="EMBL" id="CP001124">
    <property type="protein sequence ID" value="ACH40418.1"/>
    <property type="molecule type" value="Genomic_DNA"/>
</dbReference>
<dbReference type="RefSeq" id="WP_012531851.1">
    <property type="nucleotide sequence ID" value="NC_011146.1"/>
</dbReference>
<dbReference type="SMR" id="B5EBC6"/>
<dbReference type="STRING" id="404380.Gbem_3425"/>
<dbReference type="KEGG" id="gbm:Gbem_3425"/>
<dbReference type="eggNOG" id="COG0164">
    <property type="taxonomic scope" value="Bacteria"/>
</dbReference>
<dbReference type="HOGENOM" id="CLU_036532_2_1_7"/>
<dbReference type="OrthoDB" id="9803420at2"/>
<dbReference type="Proteomes" id="UP000008825">
    <property type="component" value="Chromosome"/>
</dbReference>
<dbReference type="GO" id="GO:0005737">
    <property type="term" value="C:cytoplasm"/>
    <property type="evidence" value="ECO:0007669"/>
    <property type="project" value="UniProtKB-SubCell"/>
</dbReference>
<dbReference type="GO" id="GO:0032299">
    <property type="term" value="C:ribonuclease H2 complex"/>
    <property type="evidence" value="ECO:0007669"/>
    <property type="project" value="TreeGrafter"/>
</dbReference>
<dbReference type="GO" id="GO:0030145">
    <property type="term" value="F:manganese ion binding"/>
    <property type="evidence" value="ECO:0007669"/>
    <property type="project" value="UniProtKB-UniRule"/>
</dbReference>
<dbReference type="GO" id="GO:0003723">
    <property type="term" value="F:RNA binding"/>
    <property type="evidence" value="ECO:0007669"/>
    <property type="project" value="InterPro"/>
</dbReference>
<dbReference type="GO" id="GO:0004523">
    <property type="term" value="F:RNA-DNA hybrid ribonuclease activity"/>
    <property type="evidence" value="ECO:0007669"/>
    <property type="project" value="UniProtKB-UniRule"/>
</dbReference>
<dbReference type="GO" id="GO:0043137">
    <property type="term" value="P:DNA replication, removal of RNA primer"/>
    <property type="evidence" value="ECO:0007669"/>
    <property type="project" value="TreeGrafter"/>
</dbReference>
<dbReference type="GO" id="GO:0006298">
    <property type="term" value="P:mismatch repair"/>
    <property type="evidence" value="ECO:0007669"/>
    <property type="project" value="TreeGrafter"/>
</dbReference>
<dbReference type="CDD" id="cd07182">
    <property type="entry name" value="RNase_HII_bacteria_HII_like"/>
    <property type="match status" value="1"/>
</dbReference>
<dbReference type="FunFam" id="3.30.420.10:FF:000006">
    <property type="entry name" value="Ribonuclease HII"/>
    <property type="match status" value="1"/>
</dbReference>
<dbReference type="Gene3D" id="3.30.420.10">
    <property type="entry name" value="Ribonuclease H-like superfamily/Ribonuclease H"/>
    <property type="match status" value="1"/>
</dbReference>
<dbReference type="HAMAP" id="MF_00052_B">
    <property type="entry name" value="RNase_HII_B"/>
    <property type="match status" value="1"/>
</dbReference>
<dbReference type="InterPro" id="IPR022898">
    <property type="entry name" value="RNase_HII"/>
</dbReference>
<dbReference type="InterPro" id="IPR001352">
    <property type="entry name" value="RNase_HII/HIII"/>
</dbReference>
<dbReference type="InterPro" id="IPR024567">
    <property type="entry name" value="RNase_HII/HIII_dom"/>
</dbReference>
<dbReference type="InterPro" id="IPR012337">
    <property type="entry name" value="RNaseH-like_sf"/>
</dbReference>
<dbReference type="InterPro" id="IPR036397">
    <property type="entry name" value="RNaseH_sf"/>
</dbReference>
<dbReference type="NCBIfam" id="NF000594">
    <property type="entry name" value="PRK00015.1-1"/>
    <property type="match status" value="1"/>
</dbReference>
<dbReference type="NCBIfam" id="NF000595">
    <property type="entry name" value="PRK00015.1-3"/>
    <property type="match status" value="1"/>
</dbReference>
<dbReference type="PANTHER" id="PTHR10954">
    <property type="entry name" value="RIBONUCLEASE H2 SUBUNIT A"/>
    <property type="match status" value="1"/>
</dbReference>
<dbReference type="PANTHER" id="PTHR10954:SF18">
    <property type="entry name" value="RIBONUCLEASE HII"/>
    <property type="match status" value="1"/>
</dbReference>
<dbReference type="Pfam" id="PF01351">
    <property type="entry name" value="RNase_HII"/>
    <property type="match status" value="1"/>
</dbReference>
<dbReference type="SUPFAM" id="SSF53098">
    <property type="entry name" value="Ribonuclease H-like"/>
    <property type="match status" value="1"/>
</dbReference>
<dbReference type="PROSITE" id="PS51975">
    <property type="entry name" value="RNASE_H_2"/>
    <property type="match status" value="1"/>
</dbReference>
<protein>
    <recommendedName>
        <fullName evidence="1">Ribonuclease HII</fullName>
        <shortName evidence="1">RNase HII</shortName>
        <ecNumber evidence="1">3.1.26.4</ecNumber>
    </recommendedName>
</protein>
<reference key="1">
    <citation type="submission" date="2008-07" db="EMBL/GenBank/DDBJ databases">
        <title>Complete sequence of Geobacter bemidjiensis BEM.</title>
        <authorList>
            <consortium name="US DOE Joint Genome Institute"/>
            <person name="Lucas S."/>
            <person name="Copeland A."/>
            <person name="Lapidus A."/>
            <person name="Glavina del Rio T."/>
            <person name="Dalin E."/>
            <person name="Tice H."/>
            <person name="Bruce D."/>
            <person name="Goodwin L."/>
            <person name="Pitluck S."/>
            <person name="Kiss H."/>
            <person name="Brettin T."/>
            <person name="Detter J.C."/>
            <person name="Han C."/>
            <person name="Kuske C.R."/>
            <person name="Schmutz J."/>
            <person name="Larimer F."/>
            <person name="Land M."/>
            <person name="Hauser L."/>
            <person name="Kyrpides N."/>
            <person name="Lykidis A."/>
            <person name="Lovley D."/>
            <person name="Richardson P."/>
        </authorList>
    </citation>
    <scope>NUCLEOTIDE SEQUENCE [LARGE SCALE GENOMIC DNA]</scope>
    <source>
        <strain>ATCC BAA-1014 / DSM 16622 / JCM 12645 / Bem</strain>
    </source>
</reference>
<name>RNH2_CITBB</name>
<comment type="function">
    <text evidence="1">Endonuclease that specifically degrades the RNA of RNA-DNA hybrids.</text>
</comment>
<comment type="catalytic activity">
    <reaction evidence="1">
        <text>Endonucleolytic cleavage to 5'-phosphomonoester.</text>
        <dbReference type="EC" id="3.1.26.4"/>
    </reaction>
</comment>
<comment type="cofactor">
    <cofactor evidence="1">
        <name>Mn(2+)</name>
        <dbReference type="ChEBI" id="CHEBI:29035"/>
    </cofactor>
    <cofactor evidence="1">
        <name>Mg(2+)</name>
        <dbReference type="ChEBI" id="CHEBI:18420"/>
    </cofactor>
    <text evidence="1">Manganese or magnesium. Binds 1 divalent metal ion per monomer in the absence of substrate. May bind a second metal ion after substrate binding.</text>
</comment>
<comment type="subcellular location">
    <subcellularLocation>
        <location evidence="1">Cytoplasm</location>
    </subcellularLocation>
</comment>
<comment type="similarity">
    <text evidence="1">Belongs to the RNase HII family.</text>
</comment>
<keyword id="KW-0963">Cytoplasm</keyword>
<keyword id="KW-0255">Endonuclease</keyword>
<keyword id="KW-0378">Hydrolase</keyword>
<keyword id="KW-0464">Manganese</keyword>
<keyword id="KW-0479">Metal-binding</keyword>
<keyword id="KW-0540">Nuclease</keyword>
<keyword id="KW-1185">Reference proteome</keyword>
<evidence type="ECO:0000255" key="1">
    <source>
        <dbReference type="HAMAP-Rule" id="MF_00052"/>
    </source>
</evidence>
<evidence type="ECO:0000255" key="2">
    <source>
        <dbReference type="PROSITE-ProRule" id="PRU01319"/>
    </source>
</evidence>
<evidence type="ECO:0000256" key="3">
    <source>
        <dbReference type="SAM" id="MobiDB-lite"/>
    </source>
</evidence>
<feature type="chain" id="PRO_1000194453" description="Ribonuclease HII">
    <location>
        <begin position="1"/>
        <end position="230"/>
    </location>
</feature>
<feature type="domain" description="RNase H type-2" evidence="2">
    <location>
        <begin position="28"/>
        <end position="217"/>
    </location>
</feature>
<feature type="region of interest" description="Disordered" evidence="3">
    <location>
        <begin position="209"/>
        <end position="230"/>
    </location>
</feature>
<feature type="compositionally biased region" description="Polar residues" evidence="3">
    <location>
        <begin position="215"/>
        <end position="230"/>
    </location>
</feature>
<feature type="binding site" evidence="1">
    <location>
        <position position="34"/>
    </location>
    <ligand>
        <name>a divalent metal cation</name>
        <dbReference type="ChEBI" id="CHEBI:60240"/>
    </ligand>
</feature>
<feature type="binding site" evidence="1">
    <location>
        <position position="35"/>
    </location>
    <ligand>
        <name>a divalent metal cation</name>
        <dbReference type="ChEBI" id="CHEBI:60240"/>
    </ligand>
</feature>
<feature type="binding site" evidence="1">
    <location>
        <position position="126"/>
    </location>
    <ligand>
        <name>a divalent metal cation</name>
        <dbReference type="ChEBI" id="CHEBI:60240"/>
    </ligand>
</feature>
<accession>B5EBC6</accession>
<proteinExistence type="inferred from homology"/>